<sequence>MTDKPGSAEDTIEMDDTCSPQFVQEVNRIKSQIKSLVEENHTRKFFRPLTSNIGDETAILRIQFNNMMSKMEEKEKQSLVKELIKMVHHVAEKNSPDRVFVGTNYERVVDQLLRYAHQKGAISTNLCAEGLIMTSDFRLCSRICQEKWKFINDCIPKIDYKGIRNILRYILESQLRRLPYSLSPEQVNEIRIVENVILHIVDRDSNLMPPLITLSEIMRGMPKQALMLPRLTEKLASLSVHFRPIADLSHVCGRGFVYPIPLHPSFYPLTSCWEEHGLNASNTIVQPHHTLPYRPEHTSTYLYTLYMILRQPLGKDSLHPPSKTKTKTNWEMLISVMICESMAEAESLPETEPIPRYQWDNIVNIVIYGITQHLLVPKTFFNVLKNLIKRCKYTRARDEVMWIVFQVVGSLSNLTRLDDAVTEIVELYNELFDGDVVWMGASDHPALFARFLAAAGTWMILEKDFADKMPPANETIKSHIKFIQDGVDNFDSSNTAMLAVLSNIYRTDTKMGKLIVPTLQQMLESIDDTKSLFELSYKRMAVNCFSAFPVEFMEALTFRSKKTLLIQCFQPLRSFSTVRLPSPAVFETVAKICESEDYEMAVKDMEHLAQRSLHVATAADRSSGEHQNVQAKDQCYFLFDFLVYRLPHLHAYSKYSSTVNALSYFTQHIPNNPQNHQIYRLMEQFLMRRWCWAGFHGCITAHTQMFGTSYKDNTMMRHMAYPKTFSVPDQYPFAINPEIFKMAIYSFLRAVKITAQDIAIEKTMFPTIINGFGWPEKSTSYFPKWALDAIKASDTSNAVNTEEILSDVRNTARMHTSLTPNQFVIRYGEDRDPATSHCMLAVLFHFAYNSVDSTYNITSEFYEVMEKKTPKEIVVMGNYLVDYIIADAKTQDCNEKTFKNIAKAAALLVFQFQVLRADRLLLSLIMHPATDEDALICIQIANEFILTPEFQERIRWYHQNVPKKDHFPTEYIKAIVKYHDAFPEFEACELVRSYDSSSNVHMPTYYGCLIERLLPIMDQYLHVALEQQGYKLNPQILQSVSMLYKFHAMPIHFMYSVLFTSHGLMSGPDAKSFVLAFATQIEECHLTEAFEKFNHQKSSREQLIMELIDRMSASLDFILTPPPFVAKDWKIAELSPGAQTLYLACIELMASPHSPETLVAAMINVMQMKPHARPFNIVNLTALLLTALPAAYSNALHDEFVAVFVNGETANLKFEEIVFDNYEESLLLNLPNRARTINVISQQYWLHCSLSLLNFFSHEYVPRILEHVKTEKDLWYTLRLVMPYLRRYYENWDTAKQMRSQRENFGPLHIVKLVFQKLGSMAEEGVEIVYEQHLCDLFYNCKYFFAGDFLRNTAITEFAKLPEKMRDRLKFYVSQSEPTAEQETPPEKEKSPEKEKEQEQEQHVKAHQPLESTPSVSSLPQMQHHLQQAPLLPSHQMMPPPQQHSSSLQHHLQHHTSTHQMMDTSQHQTIQQQSNHPTQQQLQHQIPNMSMHQQMGPQYPGAVFHHPSGPVGHVPMQYGMGHHMQQHPHLPHHQQMPAPMHTMNPMMQNMTPQQQYLYMQQLQQHQQHQQYMQQQQQHHHQHQQQPH</sequence>
<keyword id="KW-0010">Activator</keyword>
<keyword id="KW-0025">Alternative splicing</keyword>
<keyword id="KW-0217">Developmental protein</keyword>
<keyword id="KW-0539">Nucleus</keyword>
<keyword id="KW-1185">Reference proteome</keyword>
<keyword id="KW-0804">Transcription</keyword>
<keyword id="KW-0805">Transcription regulation</keyword>
<comment type="function">
    <text evidence="2 4 5 6 7 8">Component of the Mediator complex, a coactivator involved in regulated gene transcription of nearly all RNA polymerase II-dependent genes. Mediator functions as a bridge to convey information from gene-specific regulatory proteins to the basal RNA polymerase II transcription machinery. Mediator is recruited to promoters by direct interactions with regulatory proteins and serves as a scaffold for the assembly of a functional pre-initiation complex with RNA polymerase II and the general transcription factors (By similarity). Functions downstream of receptor let-23 and let-60/Ras during vulval induction likely by down-regulating the expression of phosphatase dep-1 and lin-12/Notch in vulva precursor cell descendants with a primary cell fate (PubMed:15901674, PubMed:7557379). Acts to repress beta-catenin target genes (PubMed:12130541). Required for asymmetric division of T-cells (PubMed:15790964). Plays a role in responses to M.nematophilum-mediated bacterial infection by promoting tail swelling and preventing constipation (PubMed:15268855).</text>
</comment>
<comment type="subunit">
    <text evidence="1 6">Component of the Mediator complex (By similarity). Interacts with let-19/mdt-13.</text>
</comment>
<comment type="subcellular location">
    <subcellularLocation>
        <location evidence="9">Nucleus</location>
    </subcellularLocation>
</comment>
<comment type="alternative products">
    <event type="alternative splicing"/>
    <isoform>
        <id>Q10669-1</id>
        <name>a</name>
        <sequence type="displayed"/>
    </isoform>
    <isoform>
        <id>Q10669-2</id>
        <name>b</name>
        <sequence type="described" ref="VSP_004435"/>
    </isoform>
</comment>
<comment type="developmental stage">
    <text evidence="8">Highest levels in embryos and larvae. Expressed in vulval precursor cells at the time of vulval determination.</text>
</comment>
<comment type="similarity">
    <text evidence="9">Belongs to the Mediator complex subunit 23 family.</text>
</comment>
<reference key="1">
    <citation type="journal article" date="1995" name="Genes Dev.">
        <title>sur-2, a novel gene, functions late in the let-60 ras-mediated signaling pathway during Caenorhabditis elegans vulval induction.</title>
        <authorList>
            <person name="Singh N."/>
            <person name="Han M."/>
        </authorList>
    </citation>
    <scope>NUCLEOTIDE SEQUENCE [MRNA] (ISOFORM A)</scope>
    <scope>FUNCTION</scope>
    <scope>DEVELOPMENTAL STAGE</scope>
    <source>
        <strain>Bristol N2</strain>
        <tissue>Embryo</tissue>
    </source>
</reference>
<reference key="2">
    <citation type="journal article" date="1998" name="Science">
        <title>Genome sequence of the nematode C. elegans: a platform for investigating biology.</title>
        <authorList>
            <consortium name="The C. elegans sequencing consortium"/>
        </authorList>
    </citation>
    <scope>NUCLEOTIDE SEQUENCE [LARGE SCALE GENOMIC DNA]</scope>
    <scope>ALTERNATIVE SPLICING</scope>
    <source>
        <strain>Bristol N2</strain>
    </source>
</reference>
<reference key="3">
    <citation type="journal article" date="2002" name="Genes Dev.">
        <title>C. elegans EOR-1/PLZF and EOR-2 positively regulate Ras and Wnt signaling and function redundantly with LIN-25 and the SUR-2 Mediator component.</title>
        <authorList>
            <person name="Howard R.M."/>
            <person name="Sundaram M.V."/>
        </authorList>
    </citation>
    <scope>FUNCTION</scope>
</reference>
<reference key="4">
    <citation type="journal article" date="2004" name="Curr. Biol.">
        <title>The ERK MAP kinase cascade mediates tail swelling and a protective response to rectal infection in C. elegans.</title>
        <authorList>
            <person name="Nicholas H.R."/>
            <person name="Hodgkin J."/>
        </authorList>
    </citation>
    <scope>FUNCTION</scope>
    <scope>MUTAGENESIS OF GLY-1347</scope>
</reference>
<reference key="5">
    <citation type="journal article" date="2005" name="Development">
        <title>Components of the transcriptional Mediator complex are required for asymmetric cell division in C. elegans.</title>
        <authorList>
            <person name="Yoda A."/>
            <person name="Kouike H."/>
            <person name="Okano H."/>
            <person name="Sawa H."/>
        </authorList>
    </citation>
    <scope>FUNCTION</scope>
    <scope>INTERACTION WITH LET-19</scope>
</reference>
<reference key="6">
    <citation type="journal article" date="2005" name="Genes Dev.">
        <title>The C. elegans homolog of the mammalian tumor suppressor Dep-1/Scc1 inhibits EGFR signaling to regulate binary cell fate decisions.</title>
        <authorList>
            <person name="Berset T.A."/>
            <person name="Hoier E.F."/>
            <person name="Hajnal A."/>
        </authorList>
    </citation>
    <scope>FUNCTION</scope>
</reference>
<dbReference type="EMBL" id="U33051">
    <property type="protein sequence ID" value="AAA85507.1"/>
    <property type="molecule type" value="mRNA"/>
</dbReference>
<dbReference type="EMBL" id="Z92834">
    <property type="protein sequence ID" value="CAB07385.2"/>
    <property type="molecule type" value="Genomic_DNA"/>
</dbReference>
<dbReference type="EMBL" id="Z92834">
    <property type="protein sequence ID" value="CAB07394.2"/>
    <property type="molecule type" value="Genomic_DNA"/>
</dbReference>
<dbReference type="PIR" id="T21986">
    <property type="entry name" value="T21986"/>
</dbReference>
<dbReference type="PIR" id="T21993">
    <property type="entry name" value="T21993"/>
</dbReference>
<dbReference type="RefSeq" id="NP_001021463.1">
    <molecule id="Q10669-2"/>
    <property type="nucleotide sequence ID" value="NM_001026292.5"/>
</dbReference>
<dbReference type="RefSeq" id="NP_493575.2">
    <molecule id="Q10669-1"/>
    <property type="nucleotide sequence ID" value="NM_061174.5"/>
</dbReference>
<dbReference type="SMR" id="Q10669"/>
<dbReference type="BioGRID" id="38728">
    <property type="interactions" value="13"/>
</dbReference>
<dbReference type="FunCoup" id="Q10669">
    <property type="interactions" value="2801"/>
</dbReference>
<dbReference type="IntAct" id="Q10669">
    <property type="interactions" value="1"/>
</dbReference>
<dbReference type="STRING" id="6239.F39B2.4b.1"/>
<dbReference type="PaxDb" id="6239-F39B2.4b"/>
<dbReference type="PeptideAtlas" id="Q10669"/>
<dbReference type="EnsemblMetazoa" id="F39B2.4a.1">
    <molecule id="Q10669-1"/>
    <property type="protein sequence ID" value="F39B2.4a.1"/>
    <property type="gene ID" value="WBGene00006349"/>
</dbReference>
<dbReference type="EnsemblMetazoa" id="F39B2.4b.1">
    <molecule id="Q10669-2"/>
    <property type="protein sequence ID" value="F39B2.4b.1"/>
    <property type="gene ID" value="WBGene00006349"/>
</dbReference>
<dbReference type="GeneID" id="173345"/>
<dbReference type="KEGG" id="cel:CELE_F39B2.4"/>
<dbReference type="UCSC" id="F39B2.4b">
    <molecule id="Q10669-1"/>
    <property type="organism name" value="c. elegans"/>
</dbReference>
<dbReference type="AGR" id="WB:WBGene00006349"/>
<dbReference type="CTD" id="173345"/>
<dbReference type="WormBase" id="F39B2.4a">
    <molecule id="Q10669-1"/>
    <property type="protein sequence ID" value="CE28023"/>
    <property type="gene ID" value="WBGene00006349"/>
    <property type="gene designation" value="sur-2"/>
</dbReference>
<dbReference type="WormBase" id="F39B2.4b">
    <molecule id="Q10669-2"/>
    <property type="protein sequence ID" value="CE28024"/>
    <property type="gene ID" value="WBGene00006349"/>
    <property type="gene designation" value="sur-2"/>
</dbReference>
<dbReference type="eggNOG" id="KOG1883">
    <property type="taxonomic scope" value="Eukaryota"/>
</dbReference>
<dbReference type="GeneTree" id="ENSGT00390000010380"/>
<dbReference type="HOGENOM" id="CLU_244777_0_0_1"/>
<dbReference type="InParanoid" id="Q10669"/>
<dbReference type="OMA" id="MMSKMEE"/>
<dbReference type="OrthoDB" id="9982951at2759"/>
<dbReference type="PhylomeDB" id="Q10669"/>
<dbReference type="SignaLink" id="Q10669"/>
<dbReference type="PRO" id="PR:Q10669"/>
<dbReference type="Proteomes" id="UP000001940">
    <property type="component" value="Chromosome I"/>
</dbReference>
<dbReference type="Bgee" id="WBGene00006349">
    <property type="expression patterns" value="Expressed in embryo and 4 other cell types or tissues"/>
</dbReference>
<dbReference type="GO" id="GO:0016592">
    <property type="term" value="C:mediator complex"/>
    <property type="evidence" value="ECO:0000314"/>
    <property type="project" value="WormBase"/>
</dbReference>
<dbReference type="GO" id="GO:0005667">
    <property type="term" value="C:transcription regulator complex"/>
    <property type="evidence" value="ECO:0000318"/>
    <property type="project" value="GO_Central"/>
</dbReference>
<dbReference type="GO" id="GO:0050830">
    <property type="term" value="P:defense response to Gram-positive bacterium"/>
    <property type="evidence" value="ECO:0000315"/>
    <property type="project" value="UniProtKB"/>
</dbReference>
<dbReference type="GO" id="GO:0010628">
    <property type="term" value="P:positive regulation of gene expression"/>
    <property type="evidence" value="ECO:0000318"/>
    <property type="project" value="GO_Central"/>
</dbReference>
<dbReference type="GO" id="GO:0042176">
    <property type="term" value="P:regulation of protein catabolic process"/>
    <property type="evidence" value="ECO:0000315"/>
    <property type="project" value="WormBase"/>
</dbReference>
<dbReference type="GO" id="GO:0006357">
    <property type="term" value="P:regulation of transcription by RNA polymerase II"/>
    <property type="evidence" value="ECO:0000315"/>
    <property type="project" value="WormBase"/>
</dbReference>
<dbReference type="InterPro" id="IPR021629">
    <property type="entry name" value="Mediator_Med23"/>
</dbReference>
<dbReference type="PANTHER" id="PTHR12691">
    <property type="entry name" value="MEDIATOR OF RNA POLYMERASE II TRANSCRIPTION SUBUNIT 23"/>
    <property type="match status" value="1"/>
</dbReference>
<dbReference type="PANTHER" id="PTHR12691:SF10">
    <property type="entry name" value="MEDIATOR OF RNA POLYMERASE II TRANSCRIPTION SUBUNIT 23"/>
    <property type="match status" value="1"/>
</dbReference>
<dbReference type="Pfam" id="PF11573">
    <property type="entry name" value="Med23"/>
    <property type="match status" value="1"/>
</dbReference>
<accession>Q10669</accession>
<accession>O45497</accession>
<accession>Q9U3G5</accession>
<evidence type="ECO:0000250" key="1"/>
<evidence type="ECO:0000250" key="2">
    <source>
        <dbReference type="UniProtKB" id="Q15648"/>
    </source>
</evidence>
<evidence type="ECO:0000256" key="3">
    <source>
        <dbReference type="SAM" id="MobiDB-lite"/>
    </source>
</evidence>
<evidence type="ECO:0000269" key="4">
    <source>
    </source>
</evidence>
<evidence type="ECO:0000269" key="5">
    <source>
    </source>
</evidence>
<evidence type="ECO:0000269" key="6">
    <source>
    </source>
</evidence>
<evidence type="ECO:0000269" key="7">
    <source>
    </source>
</evidence>
<evidence type="ECO:0000269" key="8">
    <source>
    </source>
</evidence>
<evidence type="ECO:0000305" key="9"/>
<protein>
    <recommendedName>
        <fullName>Mediator of RNA polymerase II transcription subunit 23</fullName>
    </recommendedName>
    <alternativeName>
        <fullName>Mediator complex subunit 23</fullName>
    </alternativeName>
    <alternativeName>
        <fullName>Mediator complex subunit sur-2</fullName>
    </alternativeName>
</protein>
<organism>
    <name type="scientific">Caenorhabditis elegans</name>
    <dbReference type="NCBI Taxonomy" id="6239"/>
    <lineage>
        <taxon>Eukaryota</taxon>
        <taxon>Metazoa</taxon>
        <taxon>Ecdysozoa</taxon>
        <taxon>Nematoda</taxon>
        <taxon>Chromadorea</taxon>
        <taxon>Rhabditida</taxon>
        <taxon>Rhabditina</taxon>
        <taxon>Rhabditomorpha</taxon>
        <taxon>Rhabditoidea</taxon>
        <taxon>Rhabditidae</taxon>
        <taxon>Peloderinae</taxon>
        <taxon>Caenorhabditis</taxon>
    </lineage>
</organism>
<proteinExistence type="evidence at protein level"/>
<feature type="chain" id="PRO_0000072315" description="Mediator of RNA polymerase II transcription subunit 23">
    <location>
        <begin position="1"/>
        <end position="1587"/>
    </location>
</feature>
<feature type="region of interest" description="Disordered" evidence="3">
    <location>
        <begin position="1374"/>
        <end position="1484"/>
    </location>
</feature>
<feature type="region of interest" description="Acidic">
    <location>
        <begin position="1387"/>
        <end position="1404"/>
    </location>
</feature>
<feature type="region of interest" description="Disordered" evidence="3">
    <location>
        <begin position="1567"/>
        <end position="1587"/>
    </location>
</feature>
<feature type="compositionally biased region" description="Basic and acidic residues" evidence="3">
    <location>
        <begin position="1385"/>
        <end position="1404"/>
    </location>
</feature>
<feature type="compositionally biased region" description="Polar residues" evidence="3">
    <location>
        <begin position="1410"/>
        <end position="1426"/>
    </location>
</feature>
<feature type="compositionally biased region" description="Low complexity" evidence="3">
    <location>
        <begin position="1430"/>
        <end position="1450"/>
    </location>
</feature>
<feature type="compositionally biased region" description="Polar residues" evidence="3">
    <location>
        <begin position="1463"/>
        <end position="1484"/>
    </location>
</feature>
<feature type="compositionally biased region" description="Low complexity" evidence="3">
    <location>
        <begin position="1567"/>
        <end position="1576"/>
    </location>
</feature>
<feature type="compositionally biased region" description="Basic residues" evidence="3">
    <location>
        <begin position="1577"/>
        <end position="1587"/>
    </location>
</feature>
<feature type="splice variant" id="VSP_004435" description="In isoform b." evidence="9">
    <original>Y</original>
    <variation>FLD</variation>
    <location>
        <position position="505"/>
    </location>
</feature>
<feature type="mutagenesis site" description="In e2706; lack of tail swelling and mild constipation following M.nematophilium infection. Hyperinduction of vulval epidermal cells." evidence="5">
    <original>G</original>
    <variation>I</variation>
    <location>
        <position position="1347"/>
    </location>
</feature>
<name>MED23_CAEEL</name>
<gene>
    <name type="primary">sur-2</name>
    <name type="synonym">mdt-23</name>
    <name type="ORF">F39B2.4</name>
</gene>